<dbReference type="EC" id="2.3.1.47"/>
<dbReference type="EMBL" id="U00010">
    <property type="protein sequence ID" value="AAA17066.1"/>
    <property type="molecule type" value="Genomic_DNA"/>
</dbReference>
<dbReference type="EMBL" id="AL583921">
    <property type="protein sequence ID" value="CAC31598.1"/>
    <property type="molecule type" value="Genomic_DNA"/>
</dbReference>
<dbReference type="PIR" id="S72702">
    <property type="entry name" value="S72702"/>
</dbReference>
<dbReference type="RefSeq" id="NP_301881.1">
    <property type="nucleotide sequence ID" value="NC_002677.1"/>
</dbReference>
<dbReference type="RefSeq" id="WP_010908202.1">
    <property type="nucleotide sequence ID" value="NC_002677.1"/>
</dbReference>
<dbReference type="SMR" id="P45487"/>
<dbReference type="STRING" id="272631.gene:17575048"/>
<dbReference type="KEGG" id="mle:ML1217"/>
<dbReference type="PATRIC" id="fig|272631.5.peg.2236"/>
<dbReference type="Leproma" id="ML1217"/>
<dbReference type="eggNOG" id="COG0156">
    <property type="taxonomic scope" value="Bacteria"/>
</dbReference>
<dbReference type="HOGENOM" id="CLU_015846_11_2_11"/>
<dbReference type="OrthoDB" id="9807157at2"/>
<dbReference type="UniPathway" id="UPA00078"/>
<dbReference type="Proteomes" id="UP000000806">
    <property type="component" value="Chromosome"/>
</dbReference>
<dbReference type="GO" id="GO:0008710">
    <property type="term" value="F:8-amino-7-oxononanoate synthase activity"/>
    <property type="evidence" value="ECO:0007669"/>
    <property type="project" value="UniProtKB-EC"/>
</dbReference>
<dbReference type="GO" id="GO:0030170">
    <property type="term" value="F:pyridoxal phosphate binding"/>
    <property type="evidence" value="ECO:0007669"/>
    <property type="project" value="InterPro"/>
</dbReference>
<dbReference type="GO" id="GO:0009102">
    <property type="term" value="P:biotin biosynthetic process"/>
    <property type="evidence" value="ECO:0007669"/>
    <property type="project" value="UniProtKB-UniPathway"/>
</dbReference>
<dbReference type="Gene3D" id="3.90.1150.10">
    <property type="entry name" value="Aspartate Aminotransferase, domain 1"/>
    <property type="match status" value="1"/>
</dbReference>
<dbReference type="Gene3D" id="3.40.640.10">
    <property type="entry name" value="Type I PLP-dependent aspartate aminotransferase-like (Major domain)"/>
    <property type="match status" value="1"/>
</dbReference>
<dbReference type="InterPro" id="IPR001917">
    <property type="entry name" value="Aminotrans_II_pyridoxalP_BS"/>
</dbReference>
<dbReference type="InterPro" id="IPR004839">
    <property type="entry name" value="Aminotransferase_I/II_large"/>
</dbReference>
<dbReference type="InterPro" id="IPR050087">
    <property type="entry name" value="AON_synthase_class-II"/>
</dbReference>
<dbReference type="InterPro" id="IPR015424">
    <property type="entry name" value="PyrdxlP-dep_Trfase"/>
</dbReference>
<dbReference type="InterPro" id="IPR015421">
    <property type="entry name" value="PyrdxlP-dep_Trfase_major"/>
</dbReference>
<dbReference type="InterPro" id="IPR015422">
    <property type="entry name" value="PyrdxlP-dep_Trfase_small"/>
</dbReference>
<dbReference type="PANTHER" id="PTHR13693:SF100">
    <property type="entry name" value="8-AMINO-7-OXONONANOATE SYNTHASE"/>
    <property type="match status" value="1"/>
</dbReference>
<dbReference type="PANTHER" id="PTHR13693">
    <property type="entry name" value="CLASS II AMINOTRANSFERASE/8-AMINO-7-OXONONANOATE SYNTHASE"/>
    <property type="match status" value="1"/>
</dbReference>
<dbReference type="Pfam" id="PF00155">
    <property type="entry name" value="Aminotran_1_2"/>
    <property type="match status" value="1"/>
</dbReference>
<dbReference type="SUPFAM" id="SSF53383">
    <property type="entry name" value="PLP-dependent transferases"/>
    <property type="match status" value="1"/>
</dbReference>
<dbReference type="PROSITE" id="PS00599">
    <property type="entry name" value="AA_TRANSFER_CLASS_2"/>
    <property type="match status" value="1"/>
</dbReference>
<keyword id="KW-0012">Acyltransferase</keyword>
<keyword id="KW-0093">Biotin biosynthesis</keyword>
<keyword id="KW-0663">Pyridoxal phosphate</keyword>
<keyword id="KW-1185">Reference proteome</keyword>
<keyword id="KW-0808">Transferase</keyword>
<accession>P45487</accession>
<organism>
    <name type="scientific">Mycobacterium leprae (strain TN)</name>
    <dbReference type="NCBI Taxonomy" id="272631"/>
    <lineage>
        <taxon>Bacteria</taxon>
        <taxon>Bacillati</taxon>
        <taxon>Actinomycetota</taxon>
        <taxon>Actinomycetes</taxon>
        <taxon>Mycobacteriales</taxon>
        <taxon>Mycobacteriaceae</taxon>
        <taxon>Mycobacterium</taxon>
    </lineage>
</organism>
<comment type="function">
    <text evidence="1">Catalyzes the decarboxylative condensation of pimeloyl-[acyl-carrier protein] and L-alanine to produce 8-amino-7-oxononanoate (AON), [acyl-carrier protein], and carbon dioxide.</text>
</comment>
<comment type="catalytic activity">
    <reaction>
        <text>6-carboxyhexanoyl-[ACP] + L-alanine + H(+) = (8S)-8-amino-7-oxononanoate + holo-[ACP] + CO2</text>
        <dbReference type="Rhea" id="RHEA:42288"/>
        <dbReference type="Rhea" id="RHEA-COMP:9685"/>
        <dbReference type="Rhea" id="RHEA-COMP:9955"/>
        <dbReference type="ChEBI" id="CHEBI:15378"/>
        <dbReference type="ChEBI" id="CHEBI:16526"/>
        <dbReference type="ChEBI" id="CHEBI:57972"/>
        <dbReference type="ChEBI" id="CHEBI:64479"/>
        <dbReference type="ChEBI" id="CHEBI:78846"/>
        <dbReference type="ChEBI" id="CHEBI:149468"/>
        <dbReference type="EC" id="2.3.1.47"/>
    </reaction>
</comment>
<comment type="cofactor">
    <cofactor evidence="1">
        <name>pyridoxal 5'-phosphate</name>
        <dbReference type="ChEBI" id="CHEBI:597326"/>
    </cofactor>
</comment>
<comment type="pathway">
    <text>Cofactor biosynthesis; biotin biosynthesis.</text>
</comment>
<comment type="subunit">
    <text evidence="1">Homodimer.</text>
</comment>
<comment type="similarity">
    <text evidence="2">Belongs to the class-II pyridoxal-phosphate-dependent aminotransferase family. BioF subfamily.</text>
</comment>
<evidence type="ECO:0000250" key="1"/>
<evidence type="ECO:0000305" key="2"/>
<proteinExistence type="inferred from homology"/>
<name>BIOF_MYCLE</name>
<gene>
    <name type="ordered locus">ML1217</name>
    <name type="ORF">B1170_C2_196</name>
</gene>
<reference key="1">
    <citation type="submission" date="1994-03" db="EMBL/GenBank/DDBJ databases">
        <authorList>
            <person name="Smith D.R."/>
            <person name="Robison K."/>
        </authorList>
    </citation>
    <scope>NUCLEOTIDE SEQUENCE [GENOMIC DNA]</scope>
</reference>
<reference key="2">
    <citation type="journal article" date="2001" name="Nature">
        <title>Massive gene decay in the leprosy bacillus.</title>
        <authorList>
            <person name="Cole S.T."/>
            <person name="Eiglmeier K."/>
            <person name="Parkhill J."/>
            <person name="James K.D."/>
            <person name="Thomson N.R."/>
            <person name="Wheeler P.R."/>
            <person name="Honore N."/>
            <person name="Garnier T."/>
            <person name="Churcher C.M."/>
            <person name="Harris D.E."/>
            <person name="Mungall K.L."/>
            <person name="Basham D."/>
            <person name="Brown D."/>
            <person name="Chillingworth T."/>
            <person name="Connor R."/>
            <person name="Davies R.M."/>
            <person name="Devlin K."/>
            <person name="Duthoy S."/>
            <person name="Feltwell T."/>
            <person name="Fraser A."/>
            <person name="Hamlin N."/>
            <person name="Holroyd S."/>
            <person name="Hornsby T."/>
            <person name="Jagels K."/>
            <person name="Lacroix C."/>
            <person name="Maclean J."/>
            <person name="Moule S."/>
            <person name="Murphy L.D."/>
            <person name="Oliver K."/>
            <person name="Quail M.A."/>
            <person name="Rajandream M.A."/>
            <person name="Rutherford K.M."/>
            <person name="Rutter S."/>
            <person name="Seeger K."/>
            <person name="Simon S."/>
            <person name="Simmonds M."/>
            <person name="Skelton J."/>
            <person name="Squares R."/>
            <person name="Squares S."/>
            <person name="Stevens K."/>
            <person name="Taylor K."/>
            <person name="Whitehead S."/>
            <person name="Woodward J.R."/>
            <person name="Barrell B.G."/>
        </authorList>
    </citation>
    <scope>NUCLEOTIDE SEQUENCE [LARGE SCALE GENOMIC DNA]</scope>
    <source>
        <strain>TN</strain>
    </source>
</reference>
<feature type="chain" id="PRO_0000163817" description="8-amino-7-oxononanoate synthase">
    <location>
        <begin position="1"/>
        <end position="385"/>
    </location>
</feature>
<feature type="binding site" evidence="1">
    <location>
        <position position="27"/>
    </location>
    <ligand>
        <name>substrate</name>
    </ligand>
</feature>
<feature type="binding site" evidence="1">
    <location>
        <begin position="105"/>
        <end position="106"/>
    </location>
    <ligand>
        <name>pyridoxal 5'-phosphate</name>
        <dbReference type="ChEBI" id="CHEBI:597326"/>
    </ligand>
</feature>
<feature type="binding site" evidence="1">
    <location>
        <position position="130"/>
    </location>
    <ligand>
        <name>substrate</name>
    </ligand>
</feature>
<feature type="binding site" evidence="1">
    <location>
        <position position="176"/>
    </location>
    <ligand>
        <name>pyridoxal 5'-phosphate</name>
        <dbReference type="ChEBI" id="CHEBI:597326"/>
    </ligand>
</feature>
<feature type="binding site" evidence="1">
    <location>
        <begin position="201"/>
        <end position="204"/>
    </location>
    <ligand>
        <name>pyridoxal 5'-phosphate</name>
        <dbReference type="ChEBI" id="CHEBI:597326"/>
    </ligand>
</feature>
<feature type="binding site" evidence="1">
    <location>
        <begin position="232"/>
        <end position="235"/>
    </location>
    <ligand>
        <name>pyridoxal 5'-phosphate</name>
        <dbReference type="ChEBI" id="CHEBI:597326"/>
    </ligand>
</feature>
<feature type="binding site" evidence="1">
    <location>
        <position position="345"/>
    </location>
    <ligand>
        <name>substrate</name>
    </ligand>
</feature>
<feature type="modified residue" description="N6-(pyridoxal phosphate)lysine" evidence="1">
    <location>
        <position position="235"/>
    </location>
</feature>
<sequence>MKVPIETSPLAWLEAVEQQRRGAGLRRSLRPRSAVATELDLASNDYLGLSQHPDVIDGGVAALRVWGAGATGSRLVTGDTILHHELECELAEFVGACVGLLFSSGYAANLGAVVGLSGPGSLIVSDAYSHASLVDACRLSRARVVVTPHCDVDAVDTALRSCHEERAVVVTESVFSADGVLAPVSELHDVCRRHGALLLVDEAHGLGVRGGGRGLVYEVGLAGAPDVVITTTMSKALGSQGGAVLGSSAVRAHLINTARPFIFDTGLAPAAVGAARAALQILKAETWRPEAVLQHARTLAKICDLSELPQSAVVSVVLGDPEVALAAAIACLDAGVRVGCFRPPTVPAGTSRLRLTAHASLDSAKLEVARRVLTDVLGGCCVARR</sequence>
<protein>
    <recommendedName>
        <fullName>8-amino-7-oxononanoate synthase</fullName>
        <shortName>AONS</shortName>
        <ecNumber>2.3.1.47</ecNumber>
    </recommendedName>
    <alternativeName>
        <fullName>7-keto-8-amino-pelargonic acid synthase</fullName>
        <shortName>7-KAP synthase</shortName>
        <shortName>KAPA synthase</shortName>
    </alternativeName>
    <alternativeName>
        <fullName>8-amino-7-ketopelargonate synthase</fullName>
    </alternativeName>
    <alternativeName>
        <fullName>Alpha-oxoamine synthase</fullName>
    </alternativeName>
</protein>